<organism>
    <name type="scientific">Salmonella typhimurium (strain LT2 / SGSC1412 / ATCC 700720)</name>
    <dbReference type="NCBI Taxonomy" id="99287"/>
    <lineage>
        <taxon>Bacteria</taxon>
        <taxon>Pseudomonadati</taxon>
        <taxon>Pseudomonadota</taxon>
        <taxon>Gammaproteobacteria</taxon>
        <taxon>Enterobacterales</taxon>
        <taxon>Enterobacteriaceae</taxon>
        <taxon>Salmonella</taxon>
    </lineage>
</organism>
<gene>
    <name evidence="1" type="primary">atpB</name>
    <name type="ordered locus">STM3871</name>
</gene>
<dbReference type="EMBL" id="AE006468">
    <property type="protein sequence ID" value="AAL22729.1"/>
    <property type="molecule type" value="Genomic_DNA"/>
</dbReference>
<dbReference type="RefSeq" id="NP_462770.1">
    <property type="nucleotide sequence ID" value="NC_003197.2"/>
</dbReference>
<dbReference type="RefSeq" id="WP_000135632.1">
    <property type="nucleotide sequence ID" value="NC_003197.2"/>
</dbReference>
<dbReference type="SMR" id="Q7CPE3"/>
<dbReference type="STRING" id="99287.STM3871"/>
<dbReference type="PaxDb" id="99287-STM3871"/>
<dbReference type="GeneID" id="1255398"/>
<dbReference type="KEGG" id="stm:STM3871"/>
<dbReference type="PATRIC" id="fig|99287.12.peg.4100"/>
<dbReference type="HOGENOM" id="CLU_041018_1_0_6"/>
<dbReference type="OMA" id="GFFWAAF"/>
<dbReference type="PhylomeDB" id="Q7CPE3"/>
<dbReference type="BioCyc" id="SENT99287:STM3871-MONOMER"/>
<dbReference type="Proteomes" id="UP000001014">
    <property type="component" value="Chromosome"/>
</dbReference>
<dbReference type="GO" id="GO:0005886">
    <property type="term" value="C:plasma membrane"/>
    <property type="evidence" value="ECO:0000318"/>
    <property type="project" value="GO_Central"/>
</dbReference>
<dbReference type="GO" id="GO:0045259">
    <property type="term" value="C:proton-transporting ATP synthase complex"/>
    <property type="evidence" value="ECO:0007669"/>
    <property type="project" value="UniProtKB-KW"/>
</dbReference>
<dbReference type="GO" id="GO:0046933">
    <property type="term" value="F:proton-transporting ATP synthase activity, rotational mechanism"/>
    <property type="evidence" value="ECO:0000318"/>
    <property type="project" value="GO_Central"/>
</dbReference>
<dbReference type="GO" id="GO:0042777">
    <property type="term" value="P:proton motive force-driven plasma membrane ATP synthesis"/>
    <property type="evidence" value="ECO:0000318"/>
    <property type="project" value="GO_Central"/>
</dbReference>
<dbReference type="CDD" id="cd00310">
    <property type="entry name" value="ATP-synt_Fo_a_6"/>
    <property type="match status" value="1"/>
</dbReference>
<dbReference type="FunFam" id="1.20.120.220:FF:000002">
    <property type="entry name" value="ATP synthase subunit a"/>
    <property type="match status" value="1"/>
</dbReference>
<dbReference type="Gene3D" id="1.20.120.220">
    <property type="entry name" value="ATP synthase, F0 complex, subunit A"/>
    <property type="match status" value="1"/>
</dbReference>
<dbReference type="HAMAP" id="MF_01393">
    <property type="entry name" value="ATP_synth_a_bact"/>
    <property type="match status" value="1"/>
</dbReference>
<dbReference type="InterPro" id="IPR045082">
    <property type="entry name" value="ATP_syn_F0_a_bact/chloroplast"/>
</dbReference>
<dbReference type="InterPro" id="IPR000568">
    <property type="entry name" value="ATP_synth_F0_asu"/>
</dbReference>
<dbReference type="InterPro" id="IPR023011">
    <property type="entry name" value="ATP_synth_F0_asu_AS"/>
</dbReference>
<dbReference type="InterPro" id="IPR035908">
    <property type="entry name" value="F0_ATP_A_sf"/>
</dbReference>
<dbReference type="NCBIfam" id="TIGR01131">
    <property type="entry name" value="ATP_synt_6_or_A"/>
    <property type="match status" value="1"/>
</dbReference>
<dbReference type="NCBIfam" id="NF004477">
    <property type="entry name" value="PRK05815.1-1"/>
    <property type="match status" value="1"/>
</dbReference>
<dbReference type="PANTHER" id="PTHR42823">
    <property type="entry name" value="ATP SYNTHASE SUBUNIT A, CHLOROPLASTIC"/>
    <property type="match status" value="1"/>
</dbReference>
<dbReference type="PANTHER" id="PTHR42823:SF3">
    <property type="entry name" value="ATP SYNTHASE SUBUNIT A, CHLOROPLASTIC"/>
    <property type="match status" value="1"/>
</dbReference>
<dbReference type="Pfam" id="PF00119">
    <property type="entry name" value="ATP-synt_A"/>
    <property type="match status" value="1"/>
</dbReference>
<dbReference type="PRINTS" id="PR00123">
    <property type="entry name" value="ATPASEA"/>
</dbReference>
<dbReference type="SUPFAM" id="SSF81336">
    <property type="entry name" value="F1F0 ATP synthase subunit A"/>
    <property type="match status" value="1"/>
</dbReference>
<dbReference type="PROSITE" id="PS00449">
    <property type="entry name" value="ATPASE_A"/>
    <property type="match status" value="1"/>
</dbReference>
<protein>
    <recommendedName>
        <fullName evidence="1">ATP synthase subunit a</fullName>
    </recommendedName>
    <alternativeName>
        <fullName evidence="1">ATP synthase F0 sector subunit a</fullName>
    </alternativeName>
    <alternativeName>
        <fullName evidence="1">F-ATPase subunit 6</fullName>
    </alternativeName>
</protein>
<reference key="1">
    <citation type="journal article" date="2001" name="Nature">
        <title>Complete genome sequence of Salmonella enterica serovar Typhimurium LT2.</title>
        <authorList>
            <person name="McClelland M."/>
            <person name="Sanderson K.E."/>
            <person name="Spieth J."/>
            <person name="Clifton S.W."/>
            <person name="Latreille P."/>
            <person name="Courtney L."/>
            <person name="Porwollik S."/>
            <person name="Ali J."/>
            <person name="Dante M."/>
            <person name="Du F."/>
            <person name="Hou S."/>
            <person name="Layman D."/>
            <person name="Leonard S."/>
            <person name="Nguyen C."/>
            <person name="Scott K."/>
            <person name="Holmes A."/>
            <person name="Grewal N."/>
            <person name="Mulvaney E."/>
            <person name="Ryan E."/>
            <person name="Sun H."/>
            <person name="Florea L."/>
            <person name="Miller W."/>
            <person name="Stoneking T."/>
            <person name="Nhan M."/>
            <person name="Waterston R."/>
            <person name="Wilson R.K."/>
        </authorList>
    </citation>
    <scope>NUCLEOTIDE SEQUENCE [LARGE SCALE GENOMIC DNA]</scope>
    <source>
        <strain>LT2 / SGSC1412 / ATCC 700720</strain>
    </source>
</reference>
<evidence type="ECO:0000255" key="1">
    <source>
        <dbReference type="HAMAP-Rule" id="MF_01393"/>
    </source>
</evidence>
<keyword id="KW-0066">ATP synthesis</keyword>
<keyword id="KW-0997">Cell inner membrane</keyword>
<keyword id="KW-1003">Cell membrane</keyword>
<keyword id="KW-0138">CF(0)</keyword>
<keyword id="KW-0375">Hydrogen ion transport</keyword>
<keyword id="KW-0406">Ion transport</keyword>
<keyword id="KW-0472">Membrane</keyword>
<keyword id="KW-1185">Reference proteome</keyword>
<keyword id="KW-0812">Transmembrane</keyword>
<keyword id="KW-1133">Transmembrane helix</keyword>
<keyword id="KW-0813">Transport</keyword>
<comment type="function">
    <text evidence="1">Key component of the proton channel; it plays a direct role in the translocation of protons across the membrane.</text>
</comment>
<comment type="subunit">
    <text evidence="1">F-type ATPases have 2 components, CF(1) - the catalytic core - and CF(0) - the membrane proton channel. CF(1) has five subunits: alpha(3), beta(3), gamma(1), delta(1), epsilon(1). CF(0) has three main subunits: a(1), b(2) and c(9-12). The alpha and beta chains form an alternating ring which encloses part of the gamma chain. CF(1) is attached to CF(0) by a central stalk formed by the gamma and epsilon chains, while a peripheral stalk is formed by the delta and b chains.</text>
</comment>
<comment type="subcellular location">
    <subcellularLocation>
        <location evidence="1">Cell inner membrane</location>
        <topology evidence="1">Multi-pass membrane protein</topology>
    </subcellularLocation>
</comment>
<comment type="similarity">
    <text evidence="1">Belongs to the ATPase A chain family.</text>
</comment>
<feature type="chain" id="PRO_0000362445" description="ATP synthase subunit a">
    <location>
        <begin position="1"/>
        <end position="271"/>
    </location>
</feature>
<feature type="transmembrane region" description="Helical" evidence="1">
    <location>
        <begin position="38"/>
        <end position="58"/>
    </location>
</feature>
<feature type="transmembrane region" description="Helical" evidence="1">
    <location>
        <begin position="100"/>
        <end position="120"/>
    </location>
</feature>
<feature type="transmembrane region" description="Helical" evidence="1">
    <location>
        <begin position="146"/>
        <end position="166"/>
    </location>
</feature>
<feature type="transmembrane region" description="Helical" evidence="1">
    <location>
        <begin position="220"/>
        <end position="240"/>
    </location>
</feature>
<feature type="transmembrane region" description="Helical" evidence="1">
    <location>
        <begin position="242"/>
        <end position="262"/>
    </location>
</feature>
<proteinExistence type="inferred from homology"/>
<sequence>MASENMTPQEYIGHHLNNLQLDLRTFSLVDPQNPPATFWTLNIDSMFFSVVLGLLFLVMFRSVAKKATSGVPGKFQTAIELIVGFVHGSVKDMYHGKSKLIAPLALTIFVWVFLMNLMDLLPIDLLPYIAEHWLGLPATRVVPSADVNITLSMALGVFILILFYSIKMKGIGGFAKELTLQPFNHWAFIPVNLILEGVSLLSKPVSLGLRLFGNMYAGELIFILIAGLLPWWSQWILNVPWAIFHILIITLQAFIFMVLTIVYLSMASEEH</sequence>
<accession>Q7CPE3</accession>
<name>ATP6_SALTY</name>